<proteinExistence type="inferred from homology"/>
<organism>
    <name type="scientific">Escherichia coli O157:H7</name>
    <dbReference type="NCBI Taxonomy" id="83334"/>
    <lineage>
        <taxon>Bacteria</taxon>
        <taxon>Pseudomonadati</taxon>
        <taxon>Pseudomonadota</taxon>
        <taxon>Gammaproteobacteria</taxon>
        <taxon>Enterobacterales</taxon>
        <taxon>Enterobacteriaceae</taxon>
        <taxon>Escherichia</taxon>
    </lineage>
</organism>
<gene>
    <name evidence="1" type="primary">feoC</name>
    <name type="ordered locus">Z4765</name>
    <name type="ordered locus">ECs4252</name>
</gene>
<evidence type="ECO:0000255" key="1">
    <source>
        <dbReference type="HAMAP-Rule" id="MF_01586"/>
    </source>
</evidence>
<keyword id="KW-0238">DNA-binding</keyword>
<keyword id="KW-0408">Iron</keyword>
<keyword id="KW-0411">Iron-sulfur</keyword>
<keyword id="KW-0479">Metal-binding</keyword>
<keyword id="KW-1185">Reference proteome</keyword>
<keyword id="KW-0678">Repressor</keyword>
<keyword id="KW-0804">Transcription</keyword>
<keyword id="KW-0805">Transcription regulation</keyword>
<comment type="function">
    <text evidence="1">May function as a transcriptional regulator that controls feoABC expression.</text>
</comment>
<comment type="similarity">
    <text evidence="1">Belongs to the FeoC family.</text>
</comment>
<name>FEOC_ECO57</name>
<feature type="chain" id="PRO_0000169547" description="Probable [Fe-S]-dependent transcriptional repressor">
    <location>
        <begin position="1"/>
        <end position="78"/>
    </location>
</feature>
<feature type="binding site" evidence="1">
    <location>
        <position position="56"/>
    </location>
    <ligand>
        <name>iron-sulfur cluster</name>
        <dbReference type="ChEBI" id="CHEBI:30408"/>
    </ligand>
</feature>
<feature type="binding site" evidence="1">
    <location>
        <position position="61"/>
    </location>
    <ligand>
        <name>iron-sulfur cluster</name>
        <dbReference type="ChEBI" id="CHEBI:30408"/>
    </ligand>
</feature>
<feature type="binding site" evidence="1">
    <location>
        <position position="64"/>
    </location>
    <ligand>
        <name>iron-sulfur cluster</name>
        <dbReference type="ChEBI" id="CHEBI:30408"/>
    </ligand>
</feature>
<feature type="binding site" evidence="1">
    <location>
        <position position="70"/>
    </location>
    <ligand>
        <name>iron-sulfur cluster</name>
        <dbReference type="ChEBI" id="CHEBI:30408"/>
    </ligand>
</feature>
<dbReference type="EMBL" id="AE005174">
    <property type="protein sequence ID" value="AAG58511.1"/>
    <property type="molecule type" value="Genomic_DNA"/>
</dbReference>
<dbReference type="EMBL" id="BA000007">
    <property type="protein sequence ID" value="BAB37675.1"/>
    <property type="molecule type" value="Genomic_DNA"/>
</dbReference>
<dbReference type="PIR" id="C86006">
    <property type="entry name" value="C86006"/>
</dbReference>
<dbReference type="PIR" id="D91160">
    <property type="entry name" value="D91160"/>
</dbReference>
<dbReference type="RefSeq" id="NP_312279.1">
    <property type="nucleotide sequence ID" value="NC_002695.1"/>
</dbReference>
<dbReference type="RefSeq" id="WP_000157586.1">
    <property type="nucleotide sequence ID" value="NZ_VOAI01000004.1"/>
</dbReference>
<dbReference type="SMR" id="P64639"/>
<dbReference type="STRING" id="155864.Z4765"/>
<dbReference type="GeneID" id="86948257"/>
<dbReference type="GeneID" id="915891"/>
<dbReference type="KEGG" id="ece:Z4765"/>
<dbReference type="KEGG" id="ecs:ECs_4252"/>
<dbReference type="PATRIC" id="fig|386585.9.peg.4441"/>
<dbReference type="eggNOG" id="ENOG50330S2">
    <property type="taxonomic scope" value="Bacteria"/>
</dbReference>
<dbReference type="HOGENOM" id="CLU_189182_0_0_6"/>
<dbReference type="OMA" id="HTPQPMI"/>
<dbReference type="Proteomes" id="UP000000558">
    <property type="component" value="Chromosome"/>
</dbReference>
<dbReference type="Proteomes" id="UP000002519">
    <property type="component" value="Chromosome"/>
</dbReference>
<dbReference type="GO" id="GO:0003677">
    <property type="term" value="F:DNA binding"/>
    <property type="evidence" value="ECO:0007669"/>
    <property type="project" value="UniProtKB-KW"/>
</dbReference>
<dbReference type="GO" id="GO:0005506">
    <property type="term" value="F:iron ion binding"/>
    <property type="evidence" value="ECO:0007669"/>
    <property type="project" value="UniProtKB-UniRule"/>
</dbReference>
<dbReference type="GO" id="GO:0051536">
    <property type="term" value="F:iron-sulfur cluster binding"/>
    <property type="evidence" value="ECO:0007669"/>
    <property type="project" value="UniProtKB-KW"/>
</dbReference>
<dbReference type="Gene3D" id="1.10.10.10">
    <property type="entry name" value="Winged helix-like DNA-binding domain superfamily/Winged helix DNA-binding domain"/>
    <property type="match status" value="1"/>
</dbReference>
<dbReference type="HAMAP" id="MF_01586">
    <property type="entry name" value="FeoC"/>
    <property type="match status" value="1"/>
</dbReference>
<dbReference type="InterPro" id="IPR023732">
    <property type="entry name" value="FeoC"/>
</dbReference>
<dbReference type="InterPro" id="IPR015102">
    <property type="entry name" value="Tscrpt_reg_HTH_FeoC"/>
</dbReference>
<dbReference type="InterPro" id="IPR036388">
    <property type="entry name" value="WH-like_DNA-bd_sf"/>
</dbReference>
<dbReference type="InterPro" id="IPR036390">
    <property type="entry name" value="WH_DNA-bd_sf"/>
</dbReference>
<dbReference type="NCBIfam" id="NF011960">
    <property type="entry name" value="PRK15431.1"/>
    <property type="match status" value="1"/>
</dbReference>
<dbReference type="Pfam" id="PF09012">
    <property type="entry name" value="FeoC"/>
    <property type="match status" value="1"/>
</dbReference>
<dbReference type="SUPFAM" id="SSF46785">
    <property type="entry name" value="Winged helix' DNA-binding domain"/>
    <property type="match status" value="1"/>
</dbReference>
<reference key="1">
    <citation type="journal article" date="2001" name="Nature">
        <title>Genome sequence of enterohaemorrhagic Escherichia coli O157:H7.</title>
        <authorList>
            <person name="Perna N.T."/>
            <person name="Plunkett G. III"/>
            <person name="Burland V."/>
            <person name="Mau B."/>
            <person name="Glasner J.D."/>
            <person name="Rose D.J."/>
            <person name="Mayhew G.F."/>
            <person name="Evans P.S."/>
            <person name="Gregor J."/>
            <person name="Kirkpatrick H.A."/>
            <person name="Posfai G."/>
            <person name="Hackett J."/>
            <person name="Klink S."/>
            <person name="Boutin A."/>
            <person name="Shao Y."/>
            <person name="Miller L."/>
            <person name="Grotbeck E.J."/>
            <person name="Davis N.W."/>
            <person name="Lim A."/>
            <person name="Dimalanta E.T."/>
            <person name="Potamousis K."/>
            <person name="Apodaca J."/>
            <person name="Anantharaman T.S."/>
            <person name="Lin J."/>
            <person name="Yen G."/>
            <person name="Schwartz D.C."/>
            <person name="Welch R.A."/>
            <person name="Blattner F.R."/>
        </authorList>
    </citation>
    <scope>NUCLEOTIDE SEQUENCE [LARGE SCALE GENOMIC DNA]</scope>
    <source>
        <strain>O157:H7 / EDL933 / ATCC 700927 / EHEC</strain>
    </source>
</reference>
<reference key="2">
    <citation type="journal article" date="2001" name="DNA Res.">
        <title>Complete genome sequence of enterohemorrhagic Escherichia coli O157:H7 and genomic comparison with a laboratory strain K-12.</title>
        <authorList>
            <person name="Hayashi T."/>
            <person name="Makino K."/>
            <person name="Ohnishi M."/>
            <person name="Kurokawa K."/>
            <person name="Ishii K."/>
            <person name="Yokoyama K."/>
            <person name="Han C.-G."/>
            <person name="Ohtsubo E."/>
            <person name="Nakayama K."/>
            <person name="Murata T."/>
            <person name="Tanaka M."/>
            <person name="Tobe T."/>
            <person name="Iida T."/>
            <person name="Takami H."/>
            <person name="Honda T."/>
            <person name="Sasakawa C."/>
            <person name="Ogasawara N."/>
            <person name="Yasunaga T."/>
            <person name="Kuhara S."/>
            <person name="Shiba T."/>
            <person name="Hattori M."/>
            <person name="Shinagawa H."/>
        </authorList>
    </citation>
    <scope>NUCLEOTIDE SEQUENCE [LARGE SCALE GENOMIC DNA]</scope>
    <source>
        <strain>O157:H7 / Sakai / RIMD 0509952 / EHEC</strain>
    </source>
</reference>
<accession>P64639</accession>
<accession>P46845</accession>
<sequence length="78" mass="8660">MASLIQVRDLLALRGRMEAAQISQTLNTPQPMINAMLQQLESMGKAVRIQEEPDGCLSGSCKSCPEGKACLREWWALR</sequence>
<protein>
    <recommendedName>
        <fullName evidence="1">Probable [Fe-S]-dependent transcriptional repressor</fullName>
    </recommendedName>
</protein>